<organism>
    <name type="scientific">Vibrio atlanticus (strain LGP32)</name>
    <name type="common">Vibrio splendidus (strain Mel32)</name>
    <dbReference type="NCBI Taxonomy" id="575788"/>
    <lineage>
        <taxon>Bacteria</taxon>
        <taxon>Pseudomonadati</taxon>
        <taxon>Pseudomonadota</taxon>
        <taxon>Gammaproteobacteria</taxon>
        <taxon>Vibrionales</taxon>
        <taxon>Vibrionaceae</taxon>
        <taxon>Vibrio</taxon>
    </lineage>
</organism>
<feature type="chain" id="PRO_1000199025" description="Aspartate--tRNA ligase">
    <location>
        <begin position="1"/>
        <end position="592"/>
    </location>
</feature>
<feature type="region of interest" description="Aspartate" evidence="1">
    <location>
        <begin position="195"/>
        <end position="198"/>
    </location>
</feature>
<feature type="binding site" evidence="1">
    <location>
        <position position="171"/>
    </location>
    <ligand>
        <name>L-aspartate</name>
        <dbReference type="ChEBI" id="CHEBI:29991"/>
    </ligand>
</feature>
<feature type="binding site" evidence="1">
    <location>
        <begin position="217"/>
        <end position="219"/>
    </location>
    <ligand>
        <name>ATP</name>
        <dbReference type="ChEBI" id="CHEBI:30616"/>
    </ligand>
</feature>
<feature type="binding site" evidence="1">
    <location>
        <position position="217"/>
    </location>
    <ligand>
        <name>L-aspartate</name>
        <dbReference type="ChEBI" id="CHEBI:29991"/>
    </ligand>
</feature>
<feature type="binding site" evidence="1">
    <location>
        <position position="226"/>
    </location>
    <ligand>
        <name>ATP</name>
        <dbReference type="ChEBI" id="CHEBI:30616"/>
    </ligand>
</feature>
<feature type="binding site" evidence="1">
    <location>
        <position position="448"/>
    </location>
    <ligand>
        <name>L-aspartate</name>
        <dbReference type="ChEBI" id="CHEBI:29991"/>
    </ligand>
</feature>
<feature type="binding site" evidence="1">
    <location>
        <position position="482"/>
    </location>
    <ligand>
        <name>ATP</name>
        <dbReference type="ChEBI" id="CHEBI:30616"/>
    </ligand>
</feature>
<feature type="binding site" evidence="1">
    <location>
        <position position="489"/>
    </location>
    <ligand>
        <name>L-aspartate</name>
        <dbReference type="ChEBI" id="CHEBI:29991"/>
    </ligand>
</feature>
<feature type="binding site" evidence="1">
    <location>
        <begin position="534"/>
        <end position="537"/>
    </location>
    <ligand>
        <name>ATP</name>
        <dbReference type="ChEBI" id="CHEBI:30616"/>
    </ligand>
</feature>
<gene>
    <name evidence="1" type="primary">aspS</name>
    <name type="ordered locus">VS_1104</name>
</gene>
<accession>B7VMI0</accession>
<dbReference type="EC" id="6.1.1.12" evidence="1"/>
<dbReference type="EMBL" id="FM954972">
    <property type="protein sequence ID" value="CAV18230.1"/>
    <property type="molecule type" value="Genomic_DNA"/>
</dbReference>
<dbReference type="SMR" id="B7VMI0"/>
<dbReference type="STRING" id="575788.VS_1104"/>
<dbReference type="KEGG" id="vsp:VS_1104"/>
<dbReference type="PATRIC" id="fig|575788.5.peg.2427"/>
<dbReference type="eggNOG" id="COG0173">
    <property type="taxonomic scope" value="Bacteria"/>
</dbReference>
<dbReference type="HOGENOM" id="CLU_014330_3_2_6"/>
<dbReference type="Proteomes" id="UP000009100">
    <property type="component" value="Chromosome 1"/>
</dbReference>
<dbReference type="GO" id="GO:0005737">
    <property type="term" value="C:cytoplasm"/>
    <property type="evidence" value="ECO:0007669"/>
    <property type="project" value="UniProtKB-SubCell"/>
</dbReference>
<dbReference type="GO" id="GO:0004815">
    <property type="term" value="F:aspartate-tRNA ligase activity"/>
    <property type="evidence" value="ECO:0007669"/>
    <property type="project" value="UniProtKB-UniRule"/>
</dbReference>
<dbReference type="GO" id="GO:0005524">
    <property type="term" value="F:ATP binding"/>
    <property type="evidence" value="ECO:0007669"/>
    <property type="project" value="UniProtKB-UniRule"/>
</dbReference>
<dbReference type="GO" id="GO:0003676">
    <property type="term" value="F:nucleic acid binding"/>
    <property type="evidence" value="ECO:0007669"/>
    <property type="project" value="InterPro"/>
</dbReference>
<dbReference type="GO" id="GO:0006422">
    <property type="term" value="P:aspartyl-tRNA aminoacylation"/>
    <property type="evidence" value="ECO:0007669"/>
    <property type="project" value="UniProtKB-UniRule"/>
</dbReference>
<dbReference type="CDD" id="cd00777">
    <property type="entry name" value="AspRS_core"/>
    <property type="match status" value="1"/>
</dbReference>
<dbReference type="CDD" id="cd04317">
    <property type="entry name" value="EcAspRS_like_N"/>
    <property type="match status" value="1"/>
</dbReference>
<dbReference type="FunFam" id="2.40.50.140:FF:000080">
    <property type="entry name" value="Aspartate--tRNA ligase"/>
    <property type="match status" value="1"/>
</dbReference>
<dbReference type="Gene3D" id="3.30.930.10">
    <property type="entry name" value="Bira Bifunctional Protein, Domain 2"/>
    <property type="match status" value="1"/>
</dbReference>
<dbReference type="Gene3D" id="3.30.1360.30">
    <property type="entry name" value="GAD-like domain"/>
    <property type="match status" value="1"/>
</dbReference>
<dbReference type="Gene3D" id="2.40.50.140">
    <property type="entry name" value="Nucleic acid-binding proteins"/>
    <property type="match status" value="1"/>
</dbReference>
<dbReference type="HAMAP" id="MF_00044">
    <property type="entry name" value="Asp_tRNA_synth_type1"/>
    <property type="match status" value="1"/>
</dbReference>
<dbReference type="InterPro" id="IPR004364">
    <property type="entry name" value="Aa-tRNA-synt_II"/>
</dbReference>
<dbReference type="InterPro" id="IPR006195">
    <property type="entry name" value="aa-tRNA-synth_II"/>
</dbReference>
<dbReference type="InterPro" id="IPR045864">
    <property type="entry name" value="aa-tRNA-synth_II/BPL/LPL"/>
</dbReference>
<dbReference type="InterPro" id="IPR004524">
    <property type="entry name" value="Asp-tRNA-ligase_1"/>
</dbReference>
<dbReference type="InterPro" id="IPR047089">
    <property type="entry name" value="Asp-tRNA-ligase_1_N"/>
</dbReference>
<dbReference type="InterPro" id="IPR002312">
    <property type="entry name" value="Asp/Asn-tRNA-synth_IIb"/>
</dbReference>
<dbReference type="InterPro" id="IPR047090">
    <property type="entry name" value="AspRS_core"/>
</dbReference>
<dbReference type="InterPro" id="IPR004115">
    <property type="entry name" value="GAD-like_sf"/>
</dbReference>
<dbReference type="InterPro" id="IPR029351">
    <property type="entry name" value="GAD_dom"/>
</dbReference>
<dbReference type="InterPro" id="IPR012340">
    <property type="entry name" value="NA-bd_OB-fold"/>
</dbReference>
<dbReference type="InterPro" id="IPR004365">
    <property type="entry name" value="NA-bd_OB_tRNA"/>
</dbReference>
<dbReference type="NCBIfam" id="TIGR00459">
    <property type="entry name" value="aspS_bact"/>
    <property type="match status" value="1"/>
</dbReference>
<dbReference type="NCBIfam" id="NF001750">
    <property type="entry name" value="PRK00476.1"/>
    <property type="match status" value="1"/>
</dbReference>
<dbReference type="PANTHER" id="PTHR22594:SF5">
    <property type="entry name" value="ASPARTATE--TRNA LIGASE, MITOCHONDRIAL"/>
    <property type="match status" value="1"/>
</dbReference>
<dbReference type="PANTHER" id="PTHR22594">
    <property type="entry name" value="ASPARTYL/LYSYL-TRNA SYNTHETASE"/>
    <property type="match status" value="1"/>
</dbReference>
<dbReference type="Pfam" id="PF02938">
    <property type="entry name" value="GAD"/>
    <property type="match status" value="1"/>
</dbReference>
<dbReference type="Pfam" id="PF00152">
    <property type="entry name" value="tRNA-synt_2"/>
    <property type="match status" value="1"/>
</dbReference>
<dbReference type="Pfam" id="PF01336">
    <property type="entry name" value="tRNA_anti-codon"/>
    <property type="match status" value="1"/>
</dbReference>
<dbReference type="PRINTS" id="PR01042">
    <property type="entry name" value="TRNASYNTHASP"/>
</dbReference>
<dbReference type="SUPFAM" id="SSF55681">
    <property type="entry name" value="Class II aaRS and biotin synthetases"/>
    <property type="match status" value="1"/>
</dbReference>
<dbReference type="SUPFAM" id="SSF55261">
    <property type="entry name" value="GAD domain-like"/>
    <property type="match status" value="1"/>
</dbReference>
<dbReference type="SUPFAM" id="SSF50249">
    <property type="entry name" value="Nucleic acid-binding proteins"/>
    <property type="match status" value="1"/>
</dbReference>
<dbReference type="PROSITE" id="PS50862">
    <property type="entry name" value="AA_TRNA_LIGASE_II"/>
    <property type="match status" value="1"/>
</dbReference>
<sequence length="592" mass="65981">MRTHYCGNLNKSLAGQTVELCGWVNRRRDLGGLIFIDMRDREGVVQVVVDPDMKDIFPIANQLRNEFCIKFTGEVRVRPDSQVNKDMATGEVELYATGLEIINRSEALPLDFNQTNSEEQRLKYRYIDLRRPEMSDRIKLRARASSFVRRFLDENLFLDIETPVLTKATPEGARDYLVPSRVHKGSFYALPQSPQLFKQLLMMSGFDRYYQIVKCFRDEDLRADRQPEFTQIDIETSFLTSQEVRNVTEKLVHDMWKELLDVELGQFPVMPFSEAIRRFGSDKPDLRNPLELVDVADLVKDVEFKVFSGPANDEKGRVAVIRVPGGAKLTRKQIDGYAEHVNIYGAKGLAWMKVNDRAAGMEGIQSPVAKFLSEDVINGILDRTQAESGDIILFGADKAGIVAEAMGALRLKLGTDLELTDTSAWAPLWVVDFPMFEEDGEGNLHAMHHPFTSPLGVNAEELKANPAAANSDAYDMVINGYEVGGGSVRIHSAEMQTAVFGILGIEAKEQQEKFGFLLEALKYGTPPHAGLAFGLDRLAMLLCGTENIRDVIAFPKTTAAACLLTDAPSLANPASLEELAIAVKLAEKKEQA</sequence>
<proteinExistence type="inferred from homology"/>
<comment type="function">
    <text evidence="1">Catalyzes the attachment of L-aspartate to tRNA(Asp) in a two-step reaction: L-aspartate is first activated by ATP to form Asp-AMP and then transferred to the acceptor end of tRNA(Asp).</text>
</comment>
<comment type="catalytic activity">
    <reaction evidence="1">
        <text>tRNA(Asp) + L-aspartate + ATP = L-aspartyl-tRNA(Asp) + AMP + diphosphate</text>
        <dbReference type="Rhea" id="RHEA:19649"/>
        <dbReference type="Rhea" id="RHEA-COMP:9660"/>
        <dbReference type="Rhea" id="RHEA-COMP:9678"/>
        <dbReference type="ChEBI" id="CHEBI:29991"/>
        <dbReference type="ChEBI" id="CHEBI:30616"/>
        <dbReference type="ChEBI" id="CHEBI:33019"/>
        <dbReference type="ChEBI" id="CHEBI:78442"/>
        <dbReference type="ChEBI" id="CHEBI:78516"/>
        <dbReference type="ChEBI" id="CHEBI:456215"/>
        <dbReference type="EC" id="6.1.1.12"/>
    </reaction>
</comment>
<comment type="subunit">
    <text evidence="1">Homodimer.</text>
</comment>
<comment type="subcellular location">
    <subcellularLocation>
        <location evidence="1">Cytoplasm</location>
    </subcellularLocation>
</comment>
<comment type="similarity">
    <text evidence="1">Belongs to the class-II aminoacyl-tRNA synthetase family. Type 1 subfamily.</text>
</comment>
<name>SYD_VIBA3</name>
<reference key="1">
    <citation type="submission" date="2009-02" db="EMBL/GenBank/DDBJ databases">
        <title>Vibrio splendidus str. LGP32 complete genome.</title>
        <authorList>
            <person name="Mazel D."/>
            <person name="Le Roux F."/>
        </authorList>
    </citation>
    <scope>NUCLEOTIDE SEQUENCE [LARGE SCALE GENOMIC DNA]</scope>
    <source>
        <strain>LGP32</strain>
    </source>
</reference>
<protein>
    <recommendedName>
        <fullName evidence="1">Aspartate--tRNA ligase</fullName>
        <ecNumber evidence="1">6.1.1.12</ecNumber>
    </recommendedName>
    <alternativeName>
        <fullName evidence="1">Aspartyl-tRNA synthetase</fullName>
        <shortName evidence="1">AspRS</shortName>
    </alternativeName>
</protein>
<keyword id="KW-0030">Aminoacyl-tRNA synthetase</keyword>
<keyword id="KW-0067">ATP-binding</keyword>
<keyword id="KW-0963">Cytoplasm</keyword>
<keyword id="KW-0436">Ligase</keyword>
<keyword id="KW-0547">Nucleotide-binding</keyword>
<keyword id="KW-0648">Protein biosynthesis</keyword>
<evidence type="ECO:0000255" key="1">
    <source>
        <dbReference type="HAMAP-Rule" id="MF_00044"/>
    </source>
</evidence>